<keyword id="KW-0030">Aminoacyl-tRNA synthetase</keyword>
<keyword id="KW-0067">ATP-binding</keyword>
<keyword id="KW-0963">Cytoplasm</keyword>
<keyword id="KW-0436">Ligase</keyword>
<keyword id="KW-0460">Magnesium</keyword>
<keyword id="KW-0479">Metal-binding</keyword>
<keyword id="KW-0547">Nucleotide-binding</keyword>
<keyword id="KW-0648">Protein biosynthesis</keyword>
<keyword id="KW-0694">RNA-binding</keyword>
<keyword id="KW-0820">tRNA-binding</keyword>
<protein>
    <recommendedName>
        <fullName evidence="1">Phenylalanine--tRNA ligase beta subunit</fullName>
        <ecNumber evidence="1">6.1.1.20</ecNumber>
    </recommendedName>
    <alternativeName>
        <fullName evidence="1">Phenylalanyl-tRNA synthetase beta subunit</fullName>
        <shortName evidence="1">PheRS</shortName>
    </alternativeName>
</protein>
<gene>
    <name evidence="1" type="primary">pheT</name>
    <name type="ordered locus">amb4380</name>
</gene>
<evidence type="ECO:0000255" key="1">
    <source>
        <dbReference type="HAMAP-Rule" id="MF_00283"/>
    </source>
</evidence>
<sequence length="798" mass="84829">MKFTLDWLKSHLDTDATLEQIEVGLTAIGLEVEGIDDPSKHLGGFVVGHILEAEKHPDADKLKLCKVDSGAGILQVVCGAPNARAGLKVILAQPGTYIPITGDVLKKGKVRGVESQGMMCSWRELKLGEDHDGIAELDVTLAVGASLLDIMSFDPMIEISVTPNRVDCLGVRGIARDLAAFGLGNLKPLKVEPVPGAFKSSIGVRLEFAPEDSNACPLFAGRLIRGVKNGDSPQWLKDRLTAIGLRPISALVDITNFFAYDLCRPLHVFDAAKVKGDIRARLARDGETLAGLNGKTYTLESGMTVIADENGPEALAGILGGEHSGCTEATTEVFLEAAYFDPIRTAATGRKLDILSDARFRFERGVDPAFVVPSMELATRMILDLCGGEASEAVIAGTEPDWQKSIVLRPNRVAELGGVEVSTQRMETILNDLGCAVAEHADGLLVNPPSWRGDITAEHDLVEEVIRINGYDNIPATPMPRPAMPKPVLTPGQRRSGWVRRQLATRGLVETVTWSFLPEAQAVMFGGGAPEMHLANPISSDLDVMRPSVLPNLVTAAGRNADRGMKDLGLFELGPQFDGPEPGQQRLVAAGIRAGRARGRHWADPARAVDAFDAKADILSAVAAAGANPDSLQVVAEAPVWYHPGRSGTLKLGNKPVGFFGEIHPGLLAKLDVKGPVAGFELFLEALPAQKAKATKAKPLLKASALQPLDRDFAFTLDTGVAADAVVRAARNADKVLISDVAVFDLYEGDKMAAGKKSLAITVTLQPTDKTLTDEDIEAVGAKIVAAVAKATGGELRG</sequence>
<accession>Q2VYZ1</accession>
<name>SYFB_PARM1</name>
<feature type="chain" id="PRO_0000232803" description="Phenylalanine--tRNA ligase beta subunit">
    <location>
        <begin position="1"/>
        <end position="798"/>
    </location>
</feature>
<feature type="domain" description="tRNA-binding" evidence="1">
    <location>
        <begin position="39"/>
        <end position="148"/>
    </location>
</feature>
<feature type="domain" description="B5" evidence="1">
    <location>
        <begin position="401"/>
        <end position="476"/>
    </location>
</feature>
<feature type="domain" description="FDX-ACB" evidence="1">
    <location>
        <begin position="704"/>
        <end position="797"/>
    </location>
</feature>
<feature type="binding site" evidence="1">
    <location>
        <position position="454"/>
    </location>
    <ligand>
        <name>Mg(2+)</name>
        <dbReference type="ChEBI" id="CHEBI:18420"/>
        <note>shared with alpha subunit</note>
    </ligand>
</feature>
<feature type="binding site" evidence="1">
    <location>
        <position position="460"/>
    </location>
    <ligand>
        <name>Mg(2+)</name>
        <dbReference type="ChEBI" id="CHEBI:18420"/>
        <note>shared with alpha subunit</note>
    </ligand>
</feature>
<feature type="binding site" evidence="1">
    <location>
        <position position="463"/>
    </location>
    <ligand>
        <name>Mg(2+)</name>
        <dbReference type="ChEBI" id="CHEBI:18420"/>
        <note>shared with alpha subunit</note>
    </ligand>
</feature>
<feature type="binding site" evidence="1">
    <location>
        <position position="464"/>
    </location>
    <ligand>
        <name>Mg(2+)</name>
        <dbReference type="ChEBI" id="CHEBI:18420"/>
        <note>shared with alpha subunit</note>
    </ligand>
</feature>
<comment type="catalytic activity">
    <reaction evidence="1">
        <text>tRNA(Phe) + L-phenylalanine + ATP = L-phenylalanyl-tRNA(Phe) + AMP + diphosphate + H(+)</text>
        <dbReference type="Rhea" id="RHEA:19413"/>
        <dbReference type="Rhea" id="RHEA-COMP:9668"/>
        <dbReference type="Rhea" id="RHEA-COMP:9699"/>
        <dbReference type="ChEBI" id="CHEBI:15378"/>
        <dbReference type="ChEBI" id="CHEBI:30616"/>
        <dbReference type="ChEBI" id="CHEBI:33019"/>
        <dbReference type="ChEBI" id="CHEBI:58095"/>
        <dbReference type="ChEBI" id="CHEBI:78442"/>
        <dbReference type="ChEBI" id="CHEBI:78531"/>
        <dbReference type="ChEBI" id="CHEBI:456215"/>
        <dbReference type="EC" id="6.1.1.20"/>
    </reaction>
</comment>
<comment type="cofactor">
    <cofactor evidence="1">
        <name>Mg(2+)</name>
        <dbReference type="ChEBI" id="CHEBI:18420"/>
    </cofactor>
    <text evidence="1">Binds 2 magnesium ions per tetramer.</text>
</comment>
<comment type="subunit">
    <text evidence="1">Tetramer of two alpha and two beta subunits.</text>
</comment>
<comment type="subcellular location">
    <subcellularLocation>
        <location evidence="1">Cytoplasm</location>
    </subcellularLocation>
</comment>
<comment type="similarity">
    <text evidence="1">Belongs to the phenylalanyl-tRNA synthetase beta subunit family. Type 1 subfamily.</text>
</comment>
<reference key="1">
    <citation type="journal article" date="2005" name="DNA Res.">
        <title>Complete genome sequence of the facultative anaerobic magnetotactic bacterium Magnetospirillum sp. strain AMB-1.</title>
        <authorList>
            <person name="Matsunaga T."/>
            <person name="Okamura Y."/>
            <person name="Fukuda Y."/>
            <person name="Wahyudi A.T."/>
            <person name="Murase Y."/>
            <person name="Takeyama H."/>
        </authorList>
    </citation>
    <scope>NUCLEOTIDE SEQUENCE [LARGE SCALE GENOMIC DNA]</scope>
    <source>
        <strain>ATCC 700264 / AMB-1</strain>
    </source>
</reference>
<dbReference type="EC" id="6.1.1.20" evidence="1"/>
<dbReference type="EMBL" id="AP007255">
    <property type="protein sequence ID" value="BAE53184.1"/>
    <property type="molecule type" value="Genomic_DNA"/>
</dbReference>
<dbReference type="RefSeq" id="WP_011386727.1">
    <property type="nucleotide sequence ID" value="NC_007626.1"/>
</dbReference>
<dbReference type="SMR" id="Q2VYZ1"/>
<dbReference type="STRING" id="342108.amb4380"/>
<dbReference type="KEGG" id="mag:amb4380"/>
<dbReference type="HOGENOM" id="CLU_016891_0_0_5"/>
<dbReference type="OrthoDB" id="9805455at2"/>
<dbReference type="Proteomes" id="UP000007058">
    <property type="component" value="Chromosome"/>
</dbReference>
<dbReference type="GO" id="GO:0009328">
    <property type="term" value="C:phenylalanine-tRNA ligase complex"/>
    <property type="evidence" value="ECO:0007669"/>
    <property type="project" value="TreeGrafter"/>
</dbReference>
<dbReference type="GO" id="GO:0005524">
    <property type="term" value="F:ATP binding"/>
    <property type="evidence" value="ECO:0007669"/>
    <property type="project" value="UniProtKB-UniRule"/>
</dbReference>
<dbReference type="GO" id="GO:0000287">
    <property type="term" value="F:magnesium ion binding"/>
    <property type="evidence" value="ECO:0007669"/>
    <property type="project" value="UniProtKB-UniRule"/>
</dbReference>
<dbReference type="GO" id="GO:0004826">
    <property type="term" value="F:phenylalanine-tRNA ligase activity"/>
    <property type="evidence" value="ECO:0007669"/>
    <property type="project" value="UniProtKB-UniRule"/>
</dbReference>
<dbReference type="GO" id="GO:0000049">
    <property type="term" value="F:tRNA binding"/>
    <property type="evidence" value="ECO:0007669"/>
    <property type="project" value="UniProtKB-KW"/>
</dbReference>
<dbReference type="GO" id="GO:0006432">
    <property type="term" value="P:phenylalanyl-tRNA aminoacylation"/>
    <property type="evidence" value="ECO:0007669"/>
    <property type="project" value="UniProtKB-UniRule"/>
</dbReference>
<dbReference type="CDD" id="cd00769">
    <property type="entry name" value="PheRS_beta_core"/>
    <property type="match status" value="1"/>
</dbReference>
<dbReference type="CDD" id="cd02796">
    <property type="entry name" value="tRNA_bind_bactPheRS"/>
    <property type="match status" value="1"/>
</dbReference>
<dbReference type="FunFam" id="2.40.50.140:FF:000045">
    <property type="entry name" value="Phenylalanine--tRNA ligase beta subunit"/>
    <property type="match status" value="1"/>
</dbReference>
<dbReference type="FunFam" id="3.30.56.10:FF:000002">
    <property type="entry name" value="Phenylalanine--tRNA ligase beta subunit"/>
    <property type="match status" value="1"/>
</dbReference>
<dbReference type="Gene3D" id="3.30.56.10">
    <property type="match status" value="2"/>
</dbReference>
<dbReference type="Gene3D" id="3.30.930.10">
    <property type="entry name" value="Bira Bifunctional Protein, Domain 2"/>
    <property type="match status" value="1"/>
</dbReference>
<dbReference type="Gene3D" id="3.30.70.380">
    <property type="entry name" value="Ferrodoxin-fold anticodon-binding domain"/>
    <property type="match status" value="1"/>
</dbReference>
<dbReference type="Gene3D" id="2.40.50.140">
    <property type="entry name" value="Nucleic acid-binding proteins"/>
    <property type="match status" value="1"/>
</dbReference>
<dbReference type="Gene3D" id="3.50.40.10">
    <property type="entry name" value="Phenylalanyl-trna Synthetase, Chain B, domain 3"/>
    <property type="match status" value="1"/>
</dbReference>
<dbReference type="HAMAP" id="MF_00283">
    <property type="entry name" value="Phe_tRNA_synth_beta1"/>
    <property type="match status" value="1"/>
</dbReference>
<dbReference type="InterPro" id="IPR045864">
    <property type="entry name" value="aa-tRNA-synth_II/BPL/LPL"/>
</dbReference>
<dbReference type="InterPro" id="IPR005146">
    <property type="entry name" value="B3/B4_tRNA-bd"/>
</dbReference>
<dbReference type="InterPro" id="IPR009061">
    <property type="entry name" value="DNA-bd_dom_put_sf"/>
</dbReference>
<dbReference type="InterPro" id="IPR005121">
    <property type="entry name" value="Fdx_antiC-bd"/>
</dbReference>
<dbReference type="InterPro" id="IPR036690">
    <property type="entry name" value="Fdx_antiC-bd_sf"/>
</dbReference>
<dbReference type="InterPro" id="IPR012340">
    <property type="entry name" value="NA-bd_OB-fold"/>
</dbReference>
<dbReference type="InterPro" id="IPR045060">
    <property type="entry name" value="Phe-tRNA-ligase_IIc_bsu"/>
</dbReference>
<dbReference type="InterPro" id="IPR004532">
    <property type="entry name" value="Phe-tRNA-ligase_IIc_bsu_bact"/>
</dbReference>
<dbReference type="InterPro" id="IPR020825">
    <property type="entry name" value="Phe-tRNA_synthase-like_B3/B4"/>
</dbReference>
<dbReference type="InterPro" id="IPR041616">
    <property type="entry name" value="PheRS_beta_core"/>
</dbReference>
<dbReference type="InterPro" id="IPR002547">
    <property type="entry name" value="tRNA-bd_dom"/>
</dbReference>
<dbReference type="InterPro" id="IPR033714">
    <property type="entry name" value="tRNA_bind_bactPheRS"/>
</dbReference>
<dbReference type="InterPro" id="IPR005147">
    <property type="entry name" value="tRNA_synthase_B5-dom"/>
</dbReference>
<dbReference type="NCBIfam" id="TIGR00472">
    <property type="entry name" value="pheT_bact"/>
    <property type="match status" value="1"/>
</dbReference>
<dbReference type="NCBIfam" id="NF045760">
    <property type="entry name" value="YtpR"/>
    <property type="match status" value="1"/>
</dbReference>
<dbReference type="PANTHER" id="PTHR10947:SF0">
    <property type="entry name" value="PHENYLALANINE--TRNA LIGASE BETA SUBUNIT"/>
    <property type="match status" value="1"/>
</dbReference>
<dbReference type="PANTHER" id="PTHR10947">
    <property type="entry name" value="PHENYLALANYL-TRNA SYNTHETASE BETA CHAIN AND LEUCINE-RICH REPEAT-CONTAINING PROTEIN 47"/>
    <property type="match status" value="1"/>
</dbReference>
<dbReference type="Pfam" id="PF03483">
    <property type="entry name" value="B3_4"/>
    <property type="match status" value="1"/>
</dbReference>
<dbReference type="Pfam" id="PF03484">
    <property type="entry name" value="B5"/>
    <property type="match status" value="1"/>
</dbReference>
<dbReference type="Pfam" id="PF03147">
    <property type="entry name" value="FDX-ACB"/>
    <property type="match status" value="1"/>
</dbReference>
<dbReference type="Pfam" id="PF01588">
    <property type="entry name" value="tRNA_bind"/>
    <property type="match status" value="1"/>
</dbReference>
<dbReference type="Pfam" id="PF17759">
    <property type="entry name" value="tRNA_synthFbeta"/>
    <property type="match status" value="1"/>
</dbReference>
<dbReference type="SMART" id="SM00873">
    <property type="entry name" value="B3_4"/>
    <property type="match status" value="1"/>
</dbReference>
<dbReference type="SMART" id="SM00874">
    <property type="entry name" value="B5"/>
    <property type="match status" value="1"/>
</dbReference>
<dbReference type="SMART" id="SM00896">
    <property type="entry name" value="FDX-ACB"/>
    <property type="match status" value="1"/>
</dbReference>
<dbReference type="SUPFAM" id="SSF54991">
    <property type="entry name" value="Anticodon-binding domain of PheRS"/>
    <property type="match status" value="1"/>
</dbReference>
<dbReference type="SUPFAM" id="SSF55681">
    <property type="entry name" value="Class II aaRS and biotin synthetases"/>
    <property type="match status" value="1"/>
</dbReference>
<dbReference type="SUPFAM" id="SSF50249">
    <property type="entry name" value="Nucleic acid-binding proteins"/>
    <property type="match status" value="1"/>
</dbReference>
<dbReference type="SUPFAM" id="SSF56037">
    <property type="entry name" value="PheT/TilS domain"/>
    <property type="match status" value="1"/>
</dbReference>
<dbReference type="SUPFAM" id="SSF46955">
    <property type="entry name" value="Putative DNA-binding domain"/>
    <property type="match status" value="1"/>
</dbReference>
<dbReference type="PROSITE" id="PS51483">
    <property type="entry name" value="B5"/>
    <property type="match status" value="1"/>
</dbReference>
<dbReference type="PROSITE" id="PS51447">
    <property type="entry name" value="FDX_ACB"/>
    <property type="match status" value="1"/>
</dbReference>
<dbReference type="PROSITE" id="PS50886">
    <property type="entry name" value="TRBD"/>
    <property type="match status" value="1"/>
</dbReference>
<proteinExistence type="inferred from homology"/>
<organism>
    <name type="scientific">Paramagnetospirillum magneticum (strain ATCC 700264 / AMB-1)</name>
    <name type="common">Magnetospirillum magneticum</name>
    <dbReference type="NCBI Taxonomy" id="342108"/>
    <lineage>
        <taxon>Bacteria</taxon>
        <taxon>Pseudomonadati</taxon>
        <taxon>Pseudomonadota</taxon>
        <taxon>Alphaproteobacteria</taxon>
        <taxon>Rhodospirillales</taxon>
        <taxon>Magnetospirillaceae</taxon>
        <taxon>Paramagnetospirillum</taxon>
    </lineage>
</organism>